<evidence type="ECO:0000250" key="1"/>
<evidence type="ECO:0000255" key="2"/>
<evidence type="ECO:0000305" key="3"/>
<sequence length="388" mass="43128">MKVLTAIALSAIAFTGAVAAVITQEAFLNNPRIHHDQEKYLIELAPYRTRWVTEEEKWALKLDGVNFIDITEEHNTGFYPTLHSASYVKYPPKMQYAEEVAALNKNLSKENMKANLERFTSFHTRYYKSQTGIRSATWLFDQVQRVVSESGAAEYGATVERFSHPWGQFSIIARIPGRTNKTVVLGAHQDSINLFLPSILAAPGADDDGSGTVTILEALRGLLQSDAIAKGNASNTVEFHWYSAEEGGMLGSQAIFSNYKRNRREIKAMLQQDMTGYVQGALNAGVEEAIGIMVDYVDQGLTQFLKDVVTAYCSVGYLETKCGYACSDHTSASKYGYPAAMATEAEMENTNKKIHTTDDKIKYLSFDHMLEHAKLSLGFAFELAFAPF</sequence>
<name>LAP1_ASPFM</name>
<proteinExistence type="inferred from homology"/>
<accession>Q5VJG6</accession>
<gene>
    <name type="primary">lap1</name>
</gene>
<feature type="signal peptide" evidence="2">
    <location>
        <begin position="1"/>
        <end position="19"/>
    </location>
</feature>
<feature type="propeptide" id="PRO_0000412423" evidence="1">
    <location>
        <begin position="20"/>
        <end position="88"/>
    </location>
</feature>
<feature type="chain" id="PRO_0000412424" description="Leucine aminopeptidase 1">
    <location>
        <begin position="89"/>
        <end position="388"/>
    </location>
</feature>
<feature type="binding site" evidence="1">
    <location>
        <position position="188"/>
    </location>
    <ligand>
        <name>Zn(2+)</name>
        <dbReference type="ChEBI" id="CHEBI:29105"/>
        <label>1</label>
    </ligand>
</feature>
<feature type="binding site" evidence="1">
    <location>
        <position position="207"/>
    </location>
    <ligand>
        <name>Zn(2+)</name>
        <dbReference type="ChEBI" id="CHEBI:29105"/>
        <label>1</label>
    </ligand>
</feature>
<feature type="binding site" evidence="1">
    <location>
        <position position="207"/>
    </location>
    <ligand>
        <name>Zn(2+)</name>
        <dbReference type="ChEBI" id="CHEBI:29105"/>
        <label>2</label>
        <note>catalytic</note>
    </ligand>
</feature>
<feature type="binding site" evidence="1">
    <location>
        <position position="246"/>
    </location>
    <ligand>
        <name>Zn(2+)</name>
        <dbReference type="ChEBI" id="CHEBI:29105"/>
        <label>2</label>
        <note>catalytic</note>
    </ligand>
</feature>
<feature type="binding site" evidence="1">
    <location>
        <position position="273"/>
    </location>
    <ligand>
        <name>Zn(2+)</name>
        <dbReference type="ChEBI" id="CHEBI:29105"/>
        <label>1</label>
    </ligand>
</feature>
<feature type="binding site" evidence="1">
    <location>
        <position position="355"/>
    </location>
    <ligand>
        <name>Zn(2+)</name>
        <dbReference type="ChEBI" id="CHEBI:29105"/>
        <label>2</label>
        <note>catalytic</note>
    </ligand>
</feature>
<feature type="glycosylation site" description="N-linked (GlcNAc...) asparagine" evidence="2">
    <location>
        <position position="106"/>
    </location>
</feature>
<feature type="glycosylation site" description="N-linked (GlcNAc...) asparagine" evidence="2">
    <location>
        <position position="180"/>
    </location>
</feature>
<feature type="glycosylation site" description="N-linked (GlcNAc...) asparagine" evidence="2">
    <location>
        <position position="232"/>
    </location>
</feature>
<feature type="disulfide bond" evidence="1">
    <location>
        <begin position="322"/>
        <end position="326"/>
    </location>
</feature>
<reference key="1">
    <citation type="journal article" date="2005" name="Microbiology">
        <title>Aminopeptidases and dipeptidyl-peptidases secreted by the dermatophyte Trichophyton rubrum.</title>
        <authorList>
            <person name="Monod M."/>
            <person name="Lechenne B."/>
            <person name="Jousson O."/>
            <person name="Grand D."/>
            <person name="Zaugg C."/>
            <person name="Stoecklin R."/>
            <person name="Grouzmann E."/>
        </authorList>
    </citation>
    <scope>NUCLEOTIDE SEQUENCE [GENOMIC DNA]</scope>
</reference>
<dbReference type="EC" id="3.4.11.-"/>
<dbReference type="EMBL" id="AY436356">
    <property type="protein sequence ID" value="AAR96058.1"/>
    <property type="molecule type" value="Genomic_DNA"/>
</dbReference>
<dbReference type="SMR" id="Q5VJG6"/>
<dbReference type="MEROPS" id="M28.022"/>
<dbReference type="GlyCosmos" id="Q5VJG6">
    <property type="glycosylation" value="3 sites, No reported glycans"/>
</dbReference>
<dbReference type="GO" id="GO:0005576">
    <property type="term" value="C:extracellular region"/>
    <property type="evidence" value="ECO:0007669"/>
    <property type="project" value="UniProtKB-SubCell"/>
</dbReference>
<dbReference type="GO" id="GO:0004177">
    <property type="term" value="F:aminopeptidase activity"/>
    <property type="evidence" value="ECO:0007669"/>
    <property type="project" value="UniProtKB-KW"/>
</dbReference>
<dbReference type="GO" id="GO:0046872">
    <property type="term" value="F:metal ion binding"/>
    <property type="evidence" value="ECO:0007669"/>
    <property type="project" value="UniProtKB-KW"/>
</dbReference>
<dbReference type="GO" id="GO:0008235">
    <property type="term" value="F:metalloexopeptidase activity"/>
    <property type="evidence" value="ECO:0007669"/>
    <property type="project" value="InterPro"/>
</dbReference>
<dbReference type="GO" id="GO:0006508">
    <property type="term" value="P:proteolysis"/>
    <property type="evidence" value="ECO:0007669"/>
    <property type="project" value="UniProtKB-KW"/>
</dbReference>
<dbReference type="CDD" id="cd03879">
    <property type="entry name" value="M28_AAP"/>
    <property type="match status" value="1"/>
</dbReference>
<dbReference type="FunFam" id="3.40.630.10:FF:000042">
    <property type="entry name" value="Peptide hydrolase"/>
    <property type="match status" value="1"/>
</dbReference>
<dbReference type="Gene3D" id="3.40.630.10">
    <property type="entry name" value="Zn peptidases"/>
    <property type="match status" value="1"/>
</dbReference>
<dbReference type="InterPro" id="IPR045175">
    <property type="entry name" value="M28_fam"/>
</dbReference>
<dbReference type="InterPro" id="IPR007484">
    <property type="entry name" value="Peptidase_M28"/>
</dbReference>
<dbReference type="PANTHER" id="PTHR12147:SF56">
    <property type="entry name" value="AMINOPEPTIDASE YDR415C-RELATED"/>
    <property type="match status" value="1"/>
</dbReference>
<dbReference type="PANTHER" id="PTHR12147">
    <property type="entry name" value="METALLOPEPTIDASE M28 FAMILY MEMBER"/>
    <property type="match status" value="1"/>
</dbReference>
<dbReference type="Pfam" id="PF04389">
    <property type="entry name" value="Peptidase_M28"/>
    <property type="match status" value="1"/>
</dbReference>
<dbReference type="SUPFAM" id="SSF53187">
    <property type="entry name" value="Zn-dependent exopeptidases"/>
    <property type="match status" value="1"/>
</dbReference>
<keyword id="KW-0031">Aminopeptidase</keyword>
<keyword id="KW-1015">Disulfide bond</keyword>
<keyword id="KW-0325">Glycoprotein</keyword>
<keyword id="KW-0378">Hydrolase</keyword>
<keyword id="KW-0479">Metal-binding</keyword>
<keyword id="KW-0645">Protease</keyword>
<keyword id="KW-0964">Secreted</keyword>
<keyword id="KW-0732">Signal</keyword>
<keyword id="KW-0862">Zinc</keyword>
<keyword id="KW-0865">Zymogen</keyword>
<organism>
    <name type="scientific">Aspergillus fumigatus</name>
    <name type="common">Neosartorya fumigata</name>
    <dbReference type="NCBI Taxonomy" id="746128"/>
    <lineage>
        <taxon>Eukaryota</taxon>
        <taxon>Fungi</taxon>
        <taxon>Dikarya</taxon>
        <taxon>Ascomycota</taxon>
        <taxon>Pezizomycotina</taxon>
        <taxon>Eurotiomycetes</taxon>
        <taxon>Eurotiomycetidae</taxon>
        <taxon>Eurotiales</taxon>
        <taxon>Aspergillaceae</taxon>
        <taxon>Aspergillus</taxon>
        <taxon>Aspergillus subgen. Fumigati</taxon>
    </lineage>
</organism>
<protein>
    <recommendedName>
        <fullName>Leucine aminopeptidase 1</fullName>
        <ecNumber>3.4.11.-</ecNumber>
    </recommendedName>
    <alternativeName>
        <fullName>Leucyl aminopeptidase 1</fullName>
        <shortName>LAP1</shortName>
    </alternativeName>
</protein>
<comment type="function">
    <text evidence="1">Extracellular aminopeptidase that allows assimilation of proteinaceous substrates.</text>
</comment>
<comment type="cofactor">
    <cofactor evidence="1">
        <name>Zn(2+)</name>
        <dbReference type="ChEBI" id="CHEBI:29105"/>
    </cofactor>
    <text evidence="1">Binds 2 Zn(2+) ions per subunit.</text>
</comment>
<comment type="subunit">
    <text evidence="1">Monomer.</text>
</comment>
<comment type="subcellular location">
    <subcellularLocation>
        <location evidence="1">Secreted</location>
    </subcellularLocation>
</comment>
<comment type="similarity">
    <text evidence="3">Belongs to the peptidase M28 family. M28E subfamily.</text>
</comment>